<proteinExistence type="evidence at protein level"/>
<gene>
    <name type="primary">Aurka</name>
    <name evidence="3" type="synonym">Aik</name>
    <name evidence="22" type="synonym">Airk1</name>
    <name evidence="22" type="synonym">Ark1</name>
    <name evidence="3" type="synonym">Aura</name>
    <name evidence="19" type="synonym">Ayk1</name>
    <name evidence="3" type="synonym">Btak</name>
    <name evidence="22" type="synonym">Iak1</name>
    <name evidence="3" type="synonym">Stk15</name>
    <name evidence="3" type="synonym">Stk6</name>
</gene>
<reference key="1">
    <citation type="journal article" date="1997" name="J. Cell Biol.">
        <title>A novel mammalian, mitotic spindle-associated kinase is related to yeast and fly chromosome segregation regulators.</title>
        <authorList>
            <person name="Gopalan G."/>
            <person name="Chan C.S.M."/>
            <person name="Donovan P.J."/>
        </authorList>
    </citation>
    <scope>NUCLEOTIDE SEQUENCE [MRNA] (ISOFORM 2)</scope>
    <scope>INDUCTION</scope>
    <scope>TISSUE SPECIFICITY</scope>
    <scope>SUBCELLULAR LOCATION</scope>
    <scope>FUNCTION</scope>
    <source>
        <strain>BALB/cJ</strain>
        <tissue>Testis</tissue>
    </source>
</reference>
<reference key="2">
    <citation type="journal article" date="1997" name="Oncogene">
        <title>ayk1, a novel mammalian gene related to Drosophila aurora centrosome separation kinase, is specifically expressed during meiosis.</title>
        <authorList>
            <person name="Yanai A."/>
            <person name="Arama E."/>
            <person name="Kilfin G."/>
            <person name="Motro B."/>
        </authorList>
    </citation>
    <scope>NUCLEOTIDE SEQUENCE [MRNA] (ISOFORM 1)</scope>
    <source>
        <tissue>Testis</tissue>
    </source>
</reference>
<reference key="3">
    <citation type="journal article" date="1998" name="Biochem. Biophys. Res. Commun.">
        <title>cDNA cloning, expression, subcellular localization, and chromosomal assignment of mammalian aurora homologues, aurora-related kinase (ARK) 1 and 2.</title>
        <authorList>
            <person name="Shindo M."/>
            <person name="Nakano H."/>
            <person name="Kuroyanagi H."/>
            <person name="Shirasawa T."/>
            <person name="Mihara M."/>
            <person name="Gilbert D.J."/>
            <person name="Jenkins N.A."/>
            <person name="Copeland N.G."/>
            <person name="Yagita H."/>
            <person name="Okumura K."/>
        </authorList>
    </citation>
    <scope>NUCLEOTIDE SEQUENCE [MRNA] (ISOFORM 1)</scope>
    <source>
        <strain>BALB/cJ</strain>
    </source>
</reference>
<reference key="4">
    <citation type="journal article" date="2005" name="Science">
        <title>The transcriptional landscape of the mammalian genome.</title>
        <authorList>
            <person name="Carninci P."/>
            <person name="Kasukawa T."/>
            <person name="Katayama S."/>
            <person name="Gough J."/>
            <person name="Frith M.C."/>
            <person name="Maeda N."/>
            <person name="Oyama R."/>
            <person name="Ravasi T."/>
            <person name="Lenhard B."/>
            <person name="Wells C."/>
            <person name="Kodzius R."/>
            <person name="Shimokawa K."/>
            <person name="Bajic V.B."/>
            <person name="Brenner S.E."/>
            <person name="Batalov S."/>
            <person name="Forrest A.R."/>
            <person name="Zavolan M."/>
            <person name="Davis M.J."/>
            <person name="Wilming L.G."/>
            <person name="Aidinis V."/>
            <person name="Allen J.E."/>
            <person name="Ambesi-Impiombato A."/>
            <person name="Apweiler R."/>
            <person name="Aturaliya R.N."/>
            <person name="Bailey T.L."/>
            <person name="Bansal M."/>
            <person name="Baxter L."/>
            <person name="Beisel K.W."/>
            <person name="Bersano T."/>
            <person name="Bono H."/>
            <person name="Chalk A.M."/>
            <person name="Chiu K.P."/>
            <person name="Choudhary V."/>
            <person name="Christoffels A."/>
            <person name="Clutterbuck D.R."/>
            <person name="Crowe M.L."/>
            <person name="Dalla E."/>
            <person name="Dalrymple B.P."/>
            <person name="de Bono B."/>
            <person name="Della Gatta G."/>
            <person name="di Bernardo D."/>
            <person name="Down T."/>
            <person name="Engstrom P."/>
            <person name="Fagiolini M."/>
            <person name="Faulkner G."/>
            <person name="Fletcher C.F."/>
            <person name="Fukushima T."/>
            <person name="Furuno M."/>
            <person name="Futaki S."/>
            <person name="Gariboldi M."/>
            <person name="Georgii-Hemming P."/>
            <person name="Gingeras T.R."/>
            <person name="Gojobori T."/>
            <person name="Green R.E."/>
            <person name="Gustincich S."/>
            <person name="Harbers M."/>
            <person name="Hayashi Y."/>
            <person name="Hensch T.K."/>
            <person name="Hirokawa N."/>
            <person name="Hill D."/>
            <person name="Huminiecki L."/>
            <person name="Iacono M."/>
            <person name="Ikeo K."/>
            <person name="Iwama A."/>
            <person name="Ishikawa T."/>
            <person name="Jakt M."/>
            <person name="Kanapin A."/>
            <person name="Katoh M."/>
            <person name="Kawasawa Y."/>
            <person name="Kelso J."/>
            <person name="Kitamura H."/>
            <person name="Kitano H."/>
            <person name="Kollias G."/>
            <person name="Krishnan S.P."/>
            <person name="Kruger A."/>
            <person name="Kummerfeld S.K."/>
            <person name="Kurochkin I.V."/>
            <person name="Lareau L.F."/>
            <person name="Lazarevic D."/>
            <person name="Lipovich L."/>
            <person name="Liu J."/>
            <person name="Liuni S."/>
            <person name="McWilliam S."/>
            <person name="Madan Babu M."/>
            <person name="Madera M."/>
            <person name="Marchionni L."/>
            <person name="Matsuda H."/>
            <person name="Matsuzawa S."/>
            <person name="Miki H."/>
            <person name="Mignone F."/>
            <person name="Miyake S."/>
            <person name="Morris K."/>
            <person name="Mottagui-Tabar S."/>
            <person name="Mulder N."/>
            <person name="Nakano N."/>
            <person name="Nakauchi H."/>
            <person name="Ng P."/>
            <person name="Nilsson R."/>
            <person name="Nishiguchi S."/>
            <person name="Nishikawa S."/>
            <person name="Nori F."/>
            <person name="Ohara O."/>
            <person name="Okazaki Y."/>
            <person name="Orlando V."/>
            <person name="Pang K.C."/>
            <person name="Pavan W.J."/>
            <person name="Pavesi G."/>
            <person name="Pesole G."/>
            <person name="Petrovsky N."/>
            <person name="Piazza S."/>
            <person name="Reed J."/>
            <person name="Reid J.F."/>
            <person name="Ring B.Z."/>
            <person name="Ringwald M."/>
            <person name="Rost B."/>
            <person name="Ruan Y."/>
            <person name="Salzberg S.L."/>
            <person name="Sandelin A."/>
            <person name="Schneider C."/>
            <person name="Schoenbach C."/>
            <person name="Sekiguchi K."/>
            <person name="Semple C.A."/>
            <person name="Seno S."/>
            <person name="Sessa L."/>
            <person name="Sheng Y."/>
            <person name="Shibata Y."/>
            <person name="Shimada H."/>
            <person name="Shimada K."/>
            <person name="Silva D."/>
            <person name="Sinclair B."/>
            <person name="Sperling S."/>
            <person name="Stupka E."/>
            <person name="Sugiura K."/>
            <person name="Sultana R."/>
            <person name="Takenaka Y."/>
            <person name="Taki K."/>
            <person name="Tammoja K."/>
            <person name="Tan S.L."/>
            <person name="Tang S."/>
            <person name="Taylor M.S."/>
            <person name="Tegner J."/>
            <person name="Teichmann S.A."/>
            <person name="Ueda H.R."/>
            <person name="van Nimwegen E."/>
            <person name="Verardo R."/>
            <person name="Wei C.L."/>
            <person name="Yagi K."/>
            <person name="Yamanishi H."/>
            <person name="Zabarovsky E."/>
            <person name="Zhu S."/>
            <person name="Zimmer A."/>
            <person name="Hide W."/>
            <person name="Bult C."/>
            <person name="Grimmond S.M."/>
            <person name="Teasdale R.D."/>
            <person name="Liu E.T."/>
            <person name="Brusic V."/>
            <person name="Quackenbush J."/>
            <person name="Wahlestedt C."/>
            <person name="Mattick J.S."/>
            <person name="Hume D.A."/>
            <person name="Kai C."/>
            <person name="Sasaki D."/>
            <person name="Tomaru Y."/>
            <person name="Fukuda S."/>
            <person name="Kanamori-Katayama M."/>
            <person name="Suzuki M."/>
            <person name="Aoki J."/>
            <person name="Arakawa T."/>
            <person name="Iida J."/>
            <person name="Imamura K."/>
            <person name="Itoh M."/>
            <person name="Kato T."/>
            <person name="Kawaji H."/>
            <person name="Kawagashira N."/>
            <person name="Kawashima T."/>
            <person name="Kojima M."/>
            <person name="Kondo S."/>
            <person name="Konno H."/>
            <person name="Nakano K."/>
            <person name="Ninomiya N."/>
            <person name="Nishio T."/>
            <person name="Okada M."/>
            <person name="Plessy C."/>
            <person name="Shibata K."/>
            <person name="Shiraki T."/>
            <person name="Suzuki S."/>
            <person name="Tagami M."/>
            <person name="Waki K."/>
            <person name="Watahiki A."/>
            <person name="Okamura-Oho Y."/>
            <person name="Suzuki H."/>
            <person name="Kawai J."/>
            <person name="Hayashizaki Y."/>
        </authorList>
    </citation>
    <scope>NUCLEOTIDE SEQUENCE [LARGE SCALE MRNA]</scope>
    <source>
        <strain>C57BL/6J</strain>
        <tissue>Heart</tissue>
    </source>
</reference>
<reference key="5">
    <citation type="journal article" date="2004" name="Genome Res.">
        <title>The status, quality, and expansion of the NIH full-length cDNA project: the Mammalian Gene Collection (MGC).</title>
        <authorList>
            <consortium name="The MGC Project Team"/>
        </authorList>
    </citation>
    <scope>NUCLEOTIDE SEQUENCE [LARGE SCALE MRNA] (ISOFORMS 1 AND 2)</scope>
    <source>
        <tissue>Mammary gland</tissue>
    </source>
</reference>
<reference key="6">
    <citation type="journal article" date="2005" name="Nat. Genet.">
        <title>Chfr is required for tumor suppression and Aurora A regulation.</title>
        <authorList>
            <person name="Yu X."/>
            <person name="Minter-Dykhouse K."/>
            <person name="Malureanu L."/>
            <person name="Zhao W.-M."/>
            <person name="Zhang D."/>
            <person name="Merkle C.J."/>
            <person name="Ward I.M."/>
            <person name="Saya H."/>
            <person name="Fang G."/>
            <person name="van Deursen J."/>
            <person name="Chen J."/>
        </authorList>
    </citation>
    <scope>UBIQUITINATION BY CHFR</scope>
</reference>
<reference key="7">
    <citation type="journal article" date="2009" name="Mol. Cell. Biol.">
        <title>Aurora-A kinase is essential for bipolar spindle formation and early development.</title>
        <authorList>
            <person name="Cowley D.O."/>
            <person name="Rivera-Perez J.A."/>
            <person name="Schliekelman M."/>
            <person name="He Y.J."/>
            <person name="Oliver T.G."/>
            <person name="Lu L."/>
            <person name="O'Quinn R."/>
            <person name="Salmon E.D."/>
            <person name="Magnuson T."/>
            <person name="Van Dyke T."/>
        </authorList>
    </citation>
    <scope>FUNCTION</scope>
    <scope>SUBCELLULAR LOCATION</scope>
    <scope>DISRUPTION PHENOTYPE</scope>
</reference>
<reference key="8">
    <citation type="journal article" date="2009" name="Nat. Cell Biol.">
        <title>An essential role of the aPKC-Aurora A-NDEL1 pathway in neurite elongation by modulation of microtubule dynamics.</title>
        <authorList>
            <person name="Mori D."/>
            <person name="Yamada M."/>
            <person name="Mimori-Kiyosue Y."/>
            <person name="Shirai Y."/>
            <person name="Suzuki A."/>
            <person name="Ohno S."/>
            <person name="Saya H."/>
            <person name="Wynshaw-Boris A."/>
            <person name="Hirotsune S."/>
        </authorList>
    </citation>
    <scope>FUNCTION</scope>
    <scope>SUBCELLULAR LOCATION</scope>
    <scope>TISSUE SPECIFICITY</scope>
</reference>
<reference key="9">
    <citation type="journal article" date="2010" name="Cell">
        <title>A tissue-specific atlas of mouse protein phosphorylation and expression.</title>
        <authorList>
            <person name="Huttlin E.L."/>
            <person name="Jedrychowski M.P."/>
            <person name="Elias J.E."/>
            <person name="Goswami T."/>
            <person name="Rad R."/>
            <person name="Beausoleil S.A."/>
            <person name="Villen J."/>
            <person name="Haas W."/>
            <person name="Sowa M.E."/>
            <person name="Gygi S.P."/>
        </authorList>
    </citation>
    <scope>IDENTIFICATION BY MASS SPECTROMETRY [LARGE SCALE ANALYSIS]</scope>
    <source>
        <tissue>Testis</tissue>
    </source>
</reference>
<reference key="10">
    <citation type="journal article" date="2010" name="Dev. Cell">
        <title>Pitchfork regulates primary cilia disassembly and left-right asymmetry.</title>
        <authorList>
            <person name="Kinzel D."/>
            <person name="Boldt K."/>
            <person name="Davis E.E."/>
            <person name="Burtscher I."/>
            <person name="Trumbach D."/>
            <person name="Diplas B."/>
            <person name="Attie-Bitach T."/>
            <person name="Wurst W."/>
            <person name="Katsanis N."/>
            <person name="Ueffing M."/>
            <person name="Lickert H."/>
        </authorList>
    </citation>
    <scope>FUNCTION</scope>
    <scope>INTERACTION WITH CIMAP3</scope>
    <scope>ACTIVATION BY CIMAP3</scope>
</reference>
<reference key="11">
    <citation type="journal article" date="2012" name="Cell Cycle">
        <title>Novel E3 ligase component FBXL7 ubiquitinates and degrades Aurora A, causing mitotic arrest.</title>
        <authorList>
            <person name="Coon T.A."/>
            <person name="Glasser J.R."/>
            <person name="Mallampalli R.K."/>
            <person name="Chen B.B."/>
        </authorList>
    </citation>
    <scope>UBIQUITINATION</scope>
    <scope>INTERACTION WITH FBXL7</scope>
</reference>
<reference key="12">
    <citation type="journal article" date="2012" name="J. Biol. Chem.">
        <title>Furry protein promotes Aurora A-mediated polo-like kinase 1 activation.</title>
        <authorList>
            <person name="Ikeda M."/>
            <person name="Chiba S."/>
            <person name="Ohashi K."/>
            <person name="Mizuno K."/>
        </authorList>
    </citation>
    <scope>INTERACTION WITH FRY</scope>
</reference>
<reference key="13">
    <citation type="journal article" date="2008" name="Bioorg. Med. Chem. Lett.">
        <title>Discovery of an Aurora kinase inhibitor through site-specific dynamic combinatorial chemistry.</title>
        <authorList>
            <person name="Cancilla M.T."/>
            <person name="He M.M."/>
            <person name="Viswanathan N."/>
            <person name="Simmons R.L."/>
            <person name="Taylor M."/>
            <person name="Fung A.D."/>
            <person name="Cao K."/>
            <person name="Erlanson D.A."/>
        </authorList>
    </citation>
    <scope>X-RAY CRYSTALLOGRAPHY (2.0 ANGSTROMS) OF 116-381 IN COMPLEX WITH SYNTHETIC INHIBITOR</scope>
</reference>
<reference key="14">
    <citation type="journal article" date="2008" name="Bioorg. Med. Chem. Lett.">
        <title>Discovery of a potent and selective aurora kinase inhibitor.</title>
        <authorList>
            <person name="Oslob J.D."/>
            <person name="Romanowski M.J."/>
            <person name="Allen D.A."/>
            <person name="Baskaran S."/>
            <person name="Bui M."/>
            <person name="Elling R.A."/>
            <person name="Flanagan W.M."/>
            <person name="Fung A.D."/>
            <person name="Hanan E.J."/>
            <person name="Harris S."/>
            <person name="Heumann S.A."/>
            <person name="Hoch U."/>
            <person name="Jacobs J.W."/>
            <person name="Lam J."/>
            <person name="Lawrence C.E."/>
            <person name="McDowell R.S."/>
            <person name="Nannini M.A."/>
            <person name="Shen W."/>
            <person name="Silverman J.A."/>
            <person name="Sopko M.M."/>
            <person name="Tangonan B.T."/>
            <person name="Teague J."/>
            <person name="Yoburn J.C."/>
            <person name="Yu C.H."/>
            <person name="Zhong M."/>
            <person name="Zimmerman K.M."/>
            <person name="O'Brien T."/>
            <person name="Lew W."/>
        </authorList>
    </citation>
    <scope>X-RAY CRYSTALLOGRAPHY (1.9 ANGSTROMS) OF 116-381 IN COMPLEX WITH SYNTHETIC INHIBITOR</scope>
</reference>
<reference key="15">
    <citation type="journal article" date="2014" name="Cell. Mol. Life Sci.">
        <title>The nucleotide-binding proteins Nubp1 and Nubp2 are negative regulators of ciliogenesis.</title>
        <authorList>
            <person name="Kypri E."/>
            <person name="Christodoulou A."/>
            <person name="Maimaris G."/>
            <person name="Lethan M."/>
            <person name="Markaki M."/>
            <person name="Lysandrou C."/>
            <person name="Lederer C.W."/>
            <person name="Tavernarakis N."/>
            <person name="Geimer S."/>
            <person name="Pedersen L.B."/>
            <person name="Santama N."/>
        </authorList>
    </citation>
    <scope>SUBCELLULAR LOCATION</scope>
</reference>
<reference key="16">
    <citation type="journal article" date="2016" name="Cell Cycle">
        <title>Bcl2l10, a new Tpx2 binding partner, is a master regulator of Aurora kinase A in mouse oocytes.</title>
        <authorList>
            <person name="Lee S.Y."/>
            <person name="Kim E.Y."/>
            <person name="Kim K.H."/>
            <person name="Lee K.A."/>
        </authorList>
    </citation>
    <scope>SUBCELLULAR LOCATION</scope>
    <scope>DEVELOPMENTAL STAGE</scope>
</reference>
<evidence type="ECO:0000250" key="1">
    <source>
        <dbReference type="UniProtKB" id="A0A8I3S724"/>
    </source>
</evidence>
<evidence type="ECO:0000250" key="2">
    <source>
        <dbReference type="UniProtKB" id="F1PNY0"/>
    </source>
</evidence>
<evidence type="ECO:0000250" key="3">
    <source>
        <dbReference type="UniProtKB" id="O14965"/>
    </source>
</evidence>
<evidence type="ECO:0000250" key="4">
    <source>
        <dbReference type="UniProtKB" id="P04198"/>
    </source>
</evidence>
<evidence type="ECO:0000250" key="5">
    <source>
        <dbReference type="UniProtKB" id="P59241"/>
    </source>
</evidence>
<evidence type="ECO:0000255" key="6">
    <source>
        <dbReference type="PROSITE-ProRule" id="PRU00159"/>
    </source>
</evidence>
<evidence type="ECO:0000255" key="7">
    <source>
        <dbReference type="PROSITE-ProRule" id="PRU10027"/>
    </source>
</evidence>
<evidence type="ECO:0000256" key="8">
    <source>
        <dbReference type="SAM" id="MobiDB-lite"/>
    </source>
</evidence>
<evidence type="ECO:0000269" key="9">
    <source>
    </source>
</evidence>
<evidence type="ECO:0000269" key="10">
    <source>
    </source>
</evidence>
<evidence type="ECO:0000269" key="11">
    <source>
    </source>
</evidence>
<evidence type="ECO:0000269" key="12">
    <source>
    </source>
</evidence>
<evidence type="ECO:0000269" key="13">
    <source>
    </source>
</evidence>
<evidence type="ECO:0000269" key="14">
    <source>
    </source>
</evidence>
<evidence type="ECO:0000269" key="15">
    <source>
    </source>
</evidence>
<evidence type="ECO:0000269" key="16">
    <source>
    </source>
</evidence>
<evidence type="ECO:0000269" key="17">
    <source>
    </source>
</evidence>
<evidence type="ECO:0000303" key="18">
    <source>
    </source>
</evidence>
<evidence type="ECO:0000303" key="19">
    <source>
    </source>
</evidence>
<evidence type="ECO:0000303" key="20">
    <source>
    </source>
</evidence>
<evidence type="ECO:0000305" key="21"/>
<evidence type="ECO:0000312" key="22">
    <source>
        <dbReference type="MGI" id="MGI:894678"/>
    </source>
</evidence>
<evidence type="ECO:0007829" key="23">
    <source>
        <dbReference type="PDB" id="3D15"/>
    </source>
</evidence>
<evidence type="ECO:0007829" key="24">
    <source>
        <dbReference type="PDB" id="3DJ6"/>
    </source>
</evidence>
<name>AURKA_MOUSE</name>
<accession>P97477</accession>
<accession>O35624</accession>
<accession>Q8C3H8</accession>
<accession>Q91YU4</accession>
<organism>
    <name type="scientific">Mus musculus</name>
    <name type="common">Mouse</name>
    <dbReference type="NCBI Taxonomy" id="10090"/>
    <lineage>
        <taxon>Eukaryota</taxon>
        <taxon>Metazoa</taxon>
        <taxon>Chordata</taxon>
        <taxon>Craniata</taxon>
        <taxon>Vertebrata</taxon>
        <taxon>Euteleostomi</taxon>
        <taxon>Mammalia</taxon>
        <taxon>Eutheria</taxon>
        <taxon>Euarchontoglires</taxon>
        <taxon>Glires</taxon>
        <taxon>Rodentia</taxon>
        <taxon>Myomorpha</taxon>
        <taxon>Muroidea</taxon>
        <taxon>Muridae</taxon>
        <taxon>Murinae</taxon>
        <taxon>Mus</taxon>
        <taxon>Mus</taxon>
    </lineage>
</organism>
<comment type="function">
    <text evidence="1 3 10 11 12 17">Mitotic serine/threonine kinase that contributes to the regulation of cell cycle progression (By similarity). Associates with the centrosome and the spindle microtubules during mitosis and plays a critical role in various mitotic events including the establishment of mitotic spindle, centrosome duplication, centrosome separation as well as maturation, chromosomal alignment, spindle assembly checkpoint, and cytokinesis (PubMed:19075002, PubMed:9245792). Required for normal spindle positioning during mitosis and for the localization of NUMA1 and DCTN1 to the cell cortex during metaphase (By similarity). Required for initial activation of CDK1 at centrosomes (By similarity). Phosphorylates numerous target proteins, including ARHGEF2, BORA, BRCA1, CDC25B, DLGP5, HDAC6, KIF2A, LATS2, NDEL1, PARD3, PPP1R2, PLK1, RASSF1, TACC3, p53/TP53 and TPX2 (By similarity). Phosphorylates MCRS1 which is required for MCRS1-mediated kinetochore fiber assembly and mitotic progression (By similarity). Regulates KIF2A tubulin depolymerase activity (By similarity). Required for normal axon formation (By similarity). Plays a role in microtubule remodeling during neurite extension (PubMed:19668197). Important for microtubule formation and/or stabilization (By similarity). Also acts as a key regulatory component of the p53/TP53 pathway, and particularly the checkpoint-response pathways critical for oncogenic transformation of cells, by phosphorylating and destabilizing p53/TP53 (By similarity). Phosphorylates its own inhibitors, the protein phosphatase type 1 (PP1) isoforms, to inhibit their activity (By similarity). Inhibits cilia outgrowth (By similarity). Required for cilia disassembly via phosphorylation of HDAC6 and subsequent deacetylation of alpha-tubulin (PubMed:20643351). Regulates protein levels of the anti-apoptosis protein BIRC5 by suppressing the expression of the SCF(FBXL7) E3 ubiquitin-protein ligase substrate adapter FBXL7 through the phosphorylation of the transcription factor FOXP1 (By similarity).</text>
</comment>
<comment type="catalytic activity">
    <reaction evidence="3">
        <text>L-seryl-[protein] + ATP = O-phospho-L-seryl-[protein] + ADP + H(+)</text>
        <dbReference type="Rhea" id="RHEA:17989"/>
        <dbReference type="Rhea" id="RHEA-COMP:9863"/>
        <dbReference type="Rhea" id="RHEA-COMP:11604"/>
        <dbReference type="ChEBI" id="CHEBI:15378"/>
        <dbReference type="ChEBI" id="CHEBI:29999"/>
        <dbReference type="ChEBI" id="CHEBI:30616"/>
        <dbReference type="ChEBI" id="CHEBI:83421"/>
        <dbReference type="ChEBI" id="CHEBI:456216"/>
        <dbReference type="EC" id="2.7.11.1"/>
    </reaction>
</comment>
<comment type="catalytic activity">
    <reaction evidence="3">
        <text>L-threonyl-[protein] + ATP = O-phospho-L-threonyl-[protein] + ADP + H(+)</text>
        <dbReference type="Rhea" id="RHEA:46608"/>
        <dbReference type="Rhea" id="RHEA-COMP:11060"/>
        <dbReference type="Rhea" id="RHEA-COMP:11605"/>
        <dbReference type="ChEBI" id="CHEBI:15378"/>
        <dbReference type="ChEBI" id="CHEBI:30013"/>
        <dbReference type="ChEBI" id="CHEBI:30616"/>
        <dbReference type="ChEBI" id="CHEBI:61977"/>
        <dbReference type="ChEBI" id="CHEBI:456216"/>
        <dbReference type="EC" id="2.7.11.1"/>
    </reaction>
</comment>
<comment type="activity regulation">
    <text evidence="3">Activation of CDK1, appears to be an upstream event of AURKA activation (By similarity). Phosphatase inhibitor-2 (PPP1R2) and TPX2 act also as activators (By similarity). Inactivated by the G2 checkpoint (By similarity). Inhibited by GADD45A and p53/TP53, and through dephosphorylation by protein phosphatase type 1 (PP1) (By similarity). MLN8054 is also a potent and selective inhibitor (By similarity). Activated during the early phase of cilia disassembly in the presence of CIMAP3 (By similarity). Inhibited by the small molecule inhibitor VX-680 (By similarity).</text>
</comment>
<comment type="subunit">
    <text evidence="3 12 13 14">Part of a complex composed of NEDD9, AURKA and CTTN; within the complex NEDD9 acts as a scaffold protein and is required for complex formation (By similarity). Identified in a complex with AUNIP and NIN (By similarity). Interacts with CPEB1, JTB, TACC1, TPX2, PPP2CA, as well as with the protein phosphatase type 1 (PP1) isoforms PPP1CA, PPP1CB and PPP1CC (By similarity). Also interacts with its substrates ARHGEF2, BORA, KIF2A, PARD3, and p53/TP53 (By similarity). Interaction with BORA promotes phosphorylation of PLK1 (By similarity). Interacts with GADD45A, competing with its oligomerization (By similarity). Interacts with FBXL7 and CIMAP3 (PubMed:20643351, PubMed:22306998). Interacts (via C-terminus) with AUNIP (via C-terminus) (By similarity). Interacts with SIRT2 (By similarity). Interacts with FRY; this interaction facilitates AURKA-mediated PLK1 phosphorylation (PubMed:22753416). Interacts with MYCN; interaction is phospho-independent and triggers AURKA activation; AURKA competes with FBXW7 for binding to unphosphorylated MYCN but not for binding to phosphorylated MYCN (By similarity). Interacts with HNRNPU (By similarity). Interacts with AAAS (By similarity). Interacts with KLHL18 and CUL3 (By similarity). Interacts with FOXP1 (By similarity). Interacts with HDAC6; AURKA-mediated phosphorylation of HDAC6 promotes deacetylation of alpha-tubulin (By similarity).</text>
</comment>
<comment type="subcellular location">
    <subcellularLocation>
        <location evidence="11 12 16">Cytoplasm</location>
        <location evidence="11 12 16">Cytoskeleton</location>
        <location evidence="11 12 16">Microtubule organizing center</location>
        <location evidence="11 12 16">Centrosome</location>
    </subcellularLocation>
    <subcellularLocation>
        <location evidence="10 16 17">Cytoplasm</location>
        <location evidence="10 16 17">Cytoskeleton</location>
        <location evidence="10 16 17">Spindle pole</location>
    </subcellularLocation>
    <subcellularLocation>
        <location evidence="15">Cytoplasm</location>
        <location evidence="15">Cytoskeleton</location>
        <location evidence="15">Microtubule organizing center</location>
        <location evidence="15">Centrosome</location>
        <location evidence="15">Centriole</location>
    </subcellularLocation>
    <subcellularLocation>
        <location evidence="11">Cell projection</location>
        <location evidence="11">Neuron projection</location>
    </subcellularLocation>
    <subcellularLocation>
        <location evidence="3">Cell projection</location>
        <location evidence="3">Cilium</location>
    </subcellularLocation>
    <subcellularLocation>
        <location evidence="15">Cytoplasm</location>
        <location evidence="15">Cytoskeleton</location>
        <location evidence="15">Cilium basal body</location>
    </subcellularLocation>
    <subcellularLocation>
        <location evidence="2">Basolateral cell membrane</location>
    </subcellularLocation>
    <text evidence="3 11 17">Localizes on centrosomes in interphase cells and at each spindle pole in mitosis (PubMed:9245792). Associates with both the pericentriolar material (PCM) and centrioles (By similarity). Colocalized with SIRT2 at centrosome (By similarity). Detected at the neurite hillock in developing neurons (PubMed:19668197). The localization to the spindle poles is regulated by AAAS (By similarity).</text>
</comment>
<comment type="alternative products">
    <event type="alternative splicing"/>
    <isoform>
        <id>P97477-1</id>
        <name>1</name>
        <sequence type="displayed"/>
    </isoform>
    <isoform>
        <id>P97477-2</id>
        <name>2</name>
        <sequence type="described" ref="VSP_004871"/>
    </isoform>
</comment>
<comment type="tissue specificity">
    <text evidence="11 17">Detected in embryonic neurons in dorsal root ganglia and brain cortex (at protein level). Highly expressed in testis, in about one third of the seminiferous tubules. Expression is restricted to specific spermatocytes nearing completion of prophase, with levels falling off on transition to elongated spermatids. Highly expressed in the ovary, expression in the oocyte starts around the transition to large growing follicle. Abundant expression is seen in the proliferating granulosa and thecal cells of the growing follicle, and in the young corpus luteum. Very weakly expressed in spleen and intestine.</text>
</comment>
<comment type="developmental stage">
    <text evidence="16">Expressed during all phases of oocyte maturation; localized at the meiotic spindle and spindle poles during meiosis (PubMed:27753540). At 7.5-9.5 dpc expressed evenly all over the embryo. At later stages, expression is mainly restricted to proliferating zones. The highest levels of expression at mid-embryonic development (13.5 dpc) were observed in the liver, lung, kidney and back (trapezius) muscle and all regions in active proliferation.</text>
</comment>
<comment type="induction">
    <text evidence="17">expression is cell cycle regulated and peaks at phase G2/M.</text>
</comment>
<comment type="PTM">
    <text evidence="3">Activated by phosphorylation at Thr-279; this brings about a change in the conformation of the activation segment (By similarity). Phosphorylation at Thr-279 varies during the cell cycle and is highest during M phase (By similarity). Autophosphorylated at Thr-279 upon TPX2 binding (By similarity). Thr-279 can be phosphorylated by several kinases, including PAK and PKA (By similarity). Protein phosphatase type 1 (PP1) binds AURKA and inhibits its activity by dephosphorylating Thr-279 during mitosis (By similarity). Phosphorylation at Ser-333 decreases the kinase activity (By similarity). PPP2CA controls degradation by dephosphorylating Ser-52 at the end of mitosis (By similarity).</text>
</comment>
<comment type="PTM">
    <text evidence="3 9 13">Ubiquitinated by the anaphase-promoting complex (APC), leading to its degradation by the proteasome (By similarity). Ubiquitinated by CHFR, leading to its degradation by the proteasome (PubMed:15793587). Ubiquitinated by the E3 ubiquitin-protein ligase complex SCF(FBXL7) during mitosis, leading to its degradation by the proteasome (PubMed:22306998).</text>
</comment>
<comment type="disruption phenotype">
    <text evidence="10">Death at the blastocyst stage due to mitotic defects and failure of cell proliferation.</text>
</comment>
<comment type="miscellaneous">
    <text>Centrosome amplification can occur when the cycles are uncoupled, and this amplification is associated with cancer and with an increase in the levels of chromosomal instability.</text>
</comment>
<comment type="miscellaneous">
    <molecule>Isoform 2</molecule>
    <text evidence="21">May be less abundant or less stable.</text>
</comment>
<comment type="similarity">
    <text evidence="6">Belongs to the protein kinase superfamily. Ser/Thr protein kinase family. Aurora subfamily.</text>
</comment>
<comment type="sequence caution" evidence="21">
    <conflict type="frameshift">
        <sequence resource="EMBL-CDS" id="BAC39557"/>
    </conflict>
</comment>
<protein>
    <recommendedName>
        <fullName evidence="22">Aurora kinase A</fullName>
        <ecNumber evidence="4">2.7.11.1</ecNumber>
    </recommendedName>
    <alternativeName>
        <fullName evidence="3">Aurora 2</fullName>
    </alternativeName>
    <alternativeName>
        <fullName evidence="3">Aurora/IPL1-related kinase 1</fullName>
        <shortName evidence="3">ARK-1</shortName>
        <shortName evidence="3">Aurora-related kinase 1</shortName>
    </alternativeName>
    <alternativeName>
        <fullName evidence="20">Ipl1- and aurora-related kinase 1</fullName>
    </alternativeName>
    <alternativeName>
        <fullName evidence="3">Serine/threonine-protein kinase 15</fullName>
    </alternativeName>
    <alternativeName>
        <fullName evidence="3">Serine/threonine-protein kinase 6</fullName>
    </alternativeName>
    <alternativeName>
        <fullName evidence="19">Serine/threonine-protein kinase Ayk1</fullName>
    </alternativeName>
    <alternativeName>
        <fullName evidence="5">Serine/threonine-protein kinase aurora-A</fullName>
    </alternativeName>
</protein>
<feature type="chain" id="PRO_0000086693" description="Aurora kinase A">
    <location>
        <begin position="1"/>
        <end position="395"/>
    </location>
</feature>
<feature type="domain" description="Protein kinase" evidence="6">
    <location>
        <begin position="124"/>
        <end position="374"/>
    </location>
</feature>
<feature type="region of interest" description="Disordered" evidence="8">
    <location>
        <begin position="1"/>
        <end position="114"/>
    </location>
</feature>
<feature type="region of interest" description="Activation segment" evidence="3">
    <location>
        <begin position="271"/>
        <end position="284"/>
    </location>
</feature>
<feature type="region of interest" description="Disordered" evidence="8">
    <location>
        <begin position="376"/>
        <end position="395"/>
    </location>
</feature>
<feature type="compositionally biased region" description="Polar residues" evidence="8">
    <location>
        <begin position="29"/>
        <end position="60"/>
    </location>
</feature>
<feature type="compositionally biased region" description="Polar residues" evidence="8">
    <location>
        <begin position="84"/>
        <end position="99"/>
    </location>
</feature>
<feature type="compositionally biased region" description="Basic and acidic residues" evidence="8">
    <location>
        <begin position="100"/>
        <end position="114"/>
    </location>
</feature>
<feature type="compositionally biased region" description="Polar residues" evidence="8">
    <location>
        <begin position="376"/>
        <end position="385"/>
    </location>
</feature>
<feature type="compositionally biased region" description="Basic and acidic residues" evidence="8">
    <location>
        <begin position="386"/>
        <end position="395"/>
    </location>
</feature>
<feature type="active site" description="Proton acceptor" evidence="6 7">
    <location>
        <position position="247"/>
    </location>
</feature>
<feature type="binding site" evidence="6">
    <location>
        <position position="134"/>
    </location>
    <ligand>
        <name>ATP</name>
        <dbReference type="ChEBI" id="CHEBI:30616"/>
    </ligand>
</feature>
<feature type="binding site" evidence="6">
    <location>
        <position position="153"/>
    </location>
    <ligand>
        <name>ATP</name>
        <dbReference type="ChEBI" id="CHEBI:30616"/>
    </ligand>
</feature>
<feature type="binding site" evidence="6">
    <location>
        <begin position="201"/>
        <end position="204"/>
    </location>
    <ligand>
        <name>ATP</name>
        <dbReference type="ChEBI" id="CHEBI:30616"/>
    </ligand>
</feature>
<feature type="binding site" evidence="3">
    <location>
        <begin position="251"/>
        <end position="252"/>
    </location>
    <ligand>
        <name>ATP</name>
        <dbReference type="ChEBI" id="CHEBI:30616"/>
    </ligand>
</feature>
<feature type="binding site" evidence="6">
    <location>
        <position position="265"/>
    </location>
    <ligand>
        <name>ATP</name>
        <dbReference type="ChEBI" id="CHEBI:30616"/>
    </ligand>
</feature>
<feature type="modified residue" description="Phosphoserine" evidence="3">
    <location>
        <position position="40"/>
    </location>
</feature>
<feature type="modified residue" description="Phosphoserine" evidence="3">
    <location>
        <position position="50"/>
    </location>
</feature>
<feature type="modified residue" description="Phosphothreonine" evidence="3">
    <location>
        <position position="278"/>
    </location>
</feature>
<feature type="modified residue" description="Phosphothreonine" evidence="3">
    <location>
        <position position="279"/>
    </location>
</feature>
<feature type="modified residue" description="Phosphoserine; by PKA and PAK" evidence="3">
    <location>
        <position position="333"/>
    </location>
</feature>
<feature type="cross-link" description="Glycyl lysine isopeptide (Lys-Gly) (interchain with G-Cter in SUMO2)" evidence="3">
    <location>
        <position position="249"/>
    </location>
</feature>
<feature type="splice variant" id="VSP_004871" description="In isoform 2." evidence="18 20">
    <original>M</original>
    <variation>MAVEGEPGCCKRIGKAVWRRGDM</variation>
    <location>
        <position position="1"/>
    </location>
</feature>
<feature type="sequence conflict" description="In Ref. 1; AAB63205." evidence="21" ref="1">
    <original>A</original>
    <variation>T</variation>
    <location>
        <position position="234"/>
    </location>
</feature>
<feature type="helix" evidence="24">
    <location>
        <begin position="121"/>
        <end position="123"/>
    </location>
</feature>
<feature type="strand" evidence="24">
    <location>
        <begin position="124"/>
        <end position="129"/>
    </location>
</feature>
<feature type="helix" evidence="24">
    <location>
        <begin position="131"/>
        <end position="133"/>
    </location>
</feature>
<feature type="strand" evidence="24">
    <location>
        <begin position="136"/>
        <end position="143"/>
    </location>
</feature>
<feature type="turn" evidence="24">
    <location>
        <begin position="144"/>
        <end position="146"/>
    </location>
</feature>
<feature type="strand" evidence="24">
    <location>
        <begin position="149"/>
        <end position="156"/>
    </location>
</feature>
<feature type="helix" evidence="24">
    <location>
        <begin position="157"/>
        <end position="163"/>
    </location>
</feature>
<feature type="helix" evidence="24">
    <location>
        <begin position="166"/>
        <end position="176"/>
    </location>
</feature>
<feature type="strand" evidence="24">
    <location>
        <begin position="187"/>
        <end position="192"/>
    </location>
</feature>
<feature type="strand" evidence="24">
    <location>
        <begin position="194"/>
        <end position="201"/>
    </location>
</feature>
<feature type="helix" evidence="24">
    <location>
        <begin position="209"/>
        <end position="216"/>
    </location>
</feature>
<feature type="helix" evidence="24">
    <location>
        <begin position="221"/>
        <end position="240"/>
    </location>
</feature>
<feature type="helix" evidence="24">
    <location>
        <begin position="250"/>
        <end position="252"/>
    </location>
</feature>
<feature type="strand" evidence="24">
    <location>
        <begin position="253"/>
        <end position="255"/>
    </location>
</feature>
<feature type="strand" evidence="24">
    <location>
        <begin position="261"/>
        <end position="263"/>
    </location>
</feature>
<feature type="strand" evidence="23">
    <location>
        <begin position="270"/>
        <end position="272"/>
    </location>
</feature>
<feature type="helix" evidence="24">
    <location>
        <begin position="284"/>
        <end position="286"/>
    </location>
</feature>
<feature type="helix" evidence="24">
    <location>
        <begin position="289"/>
        <end position="292"/>
    </location>
</feature>
<feature type="helix" evidence="24">
    <location>
        <begin position="299"/>
        <end position="315"/>
    </location>
</feature>
<feature type="helix" evidence="24">
    <location>
        <begin position="325"/>
        <end position="333"/>
    </location>
</feature>
<feature type="helix" evidence="24">
    <location>
        <begin position="345"/>
        <end position="354"/>
    </location>
</feature>
<feature type="helix" evidence="24">
    <location>
        <begin position="359"/>
        <end position="361"/>
    </location>
</feature>
<feature type="helix" evidence="24">
    <location>
        <begin position="365"/>
        <end position="370"/>
    </location>
</feature>
<feature type="helix" evidence="24">
    <location>
        <begin position="372"/>
        <end position="377"/>
    </location>
</feature>
<dbReference type="EC" id="2.7.11.1" evidence="4"/>
<dbReference type="EMBL" id="U80932">
    <property type="protein sequence ID" value="AAB62982.1"/>
    <property type="molecule type" value="mRNA"/>
</dbReference>
<dbReference type="EMBL" id="AF007817">
    <property type="protein sequence ID" value="AAB63205.1"/>
    <property type="molecule type" value="mRNA"/>
</dbReference>
<dbReference type="EMBL" id="U69106">
    <property type="protein sequence ID" value="AAC12682.1"/>
    <property type="molecule type" value="mRNA"/>
</dbReference>
<dbReference type="EMBL" id="AK085861">
    <property type="protein sequence ID" value="BAC39557.1"/>
    <property type="status" value="ALT_FRAME"/>
    <property type="molecule type" value="mRNA"/>
</dbReference>
<dbReference type="EMBL" id="BC005425">
    <property type="protein sequence ID" value="AAH05425.1"/>
    <property type="molecule type" value="mRNA"/>
</dbReference>
<dbReference type="EMBL" id="BC014711">
    <property type="protein sequence ID" value="AAH14711.1"/>
    <property type="molecule type" value="mRNA"/>
</dbReference>
<dbReference type="CCDS" id="CCDS17129.1">
    <molecule id="P97477-2"/>
</dbReference>
<dbReference type="CCDS" id="CCDS71204.1">
    <molecule id="P97477-1"/>
</dbReference>
<dbReference type="PIR" id="JC5975">
    <property type="entry name" value="JC5975"/>
</dbReference>
<dbReference type="RefSeq" id="NP_001278114.1">
    <molecule id="P97477-1"/>
    <property type="nucleotide sequence ID" value="NM_001291185.2"/>
</dbReference>
<dbReference type="RefSeq" id="NP_001408053.1">
    <molecule id="P97477-1"/>
    <property type="nucleotide sequence ID" value="NM_001421124.1"/>
</dbReference>
<dbReference type="RefSeq" id="NP_035627.1">
    <molecule id="P97477-2"/>
    <property type="nucleotide sequence ID" value="NM_011497.5"/>
</dbReference>
<dbReference type="RefSeq" id="XP_006499138.1">
    <property type="nucleotide sequence ID" value="XM_006499075.2"/>
</dbReference>
<dbReference type="PDB" id="3D14">
    <property type="method" value="X-ray"/>
    <property type="resolution" value="1.90 A"/>
    <property type="chains" value="A=116-381"/>
</dbReference>
<dbReference type="PDB" id="3D15">
    <property type="method" value="X-ray"/>
    <property type="resolution" value="2.30 A"/>
    <property type="chains" value="A=116-381"/>
</dbReference>
<dbReference type="PDB" id="3D2I">
    <property type="method" value="X-ray"/>
    <property type="resolution" value="2.90 A"/>
    <property type="chains" value="A=116-381"/>
</dbReference>
<dbReference type="PDB" id="3D2K">
    <property type="method" value="X-ray"/>
    <property type="resolution" value="2.50 A"/>
    <property type="chains" value="A=116-381"/>
</dbReference>
<dbReference type="PDB" id="3DAJ">
    <property type="method" value="X-ray"/>
    <property type="resolution" value="2.00 A"/>
    <property type="chains" value="A=116-381"/>
</dbReference>
<dbReference type="PDB" id="3DJ5">
    <property type="method" value="X-ray"/>
    <property type="resolution" value="1.80 A"/>
    <property type="chains" value="A=116-381"/>
</dbReference>
<dbReference type="PDB" id="3DJ6">
    <property type="method" value="X-ray"/>
    <property type="resolution" value="1.70 A"/>
    <property type="chains" value="A=116-381"/>
</dbReference>
<dbReference type="PDB" id="3DJ7">
    <property type="method" value="X-ray"/>
    <property type="resolution" value="2.80 A"/>
    <property type="chains" value="A=116-381"/>
</dbReference>
<dbReference type="PDBsum" id="3D14"/>
<dbReference type="PDBsum" id="3D15"/>
<dbReference type="PDBsum" id="3D2I"/>
<dbReference type="PDBsum" id="3D2K"/>
<dbReference type="PDBsum" id="3DAJ"/>
<dbReference type="PDBsum" id="3DJ5"/>
<dbReference type="PDBsum" id="3DJ6"/>
<dbReference type="PDBsum" id="3DJ7"/>
<dbReference type="SMR" id="P97477"/>
<dbReference type="BioGRID" id="203548">
    <property type="interactions" value="12"/>
</dbReference>
<dbReference type="FunCoup" id="P97477">
    <property type="interactions" value="1690"/>
</dbReference>
<dbReference type="IntAct" id="P97477">
    <property type="interactions" value="1"/>
</dbReference>
<dbReference type="STRING" id="10090.ENSMUSP00000028997"/>
<dbReference type="BindingDB" id="P97477"/>
<dbReference type="ChEMBL" id="CHEMBL2211"/>
<dbReference type="iPTMnet" id="P97477"/>
<dbReference type="PhosphoSitePlus" id="P97477"/>
<dbReference type="SwissPalm" id="P97477"/>
<dbReference type="PaxDb" id="10090-ENSMUSP00000028997"/>
<dbReference type="PeptideAtlas" id="P97477"/>
<dbReference type="ProteomicsDB" id="277137">
    <molecule id="P97477-1"/>
</dbReference>
<dbReference type="ProteomicsDB" id="277138">
    <molecule id="P97477-2"/>
</dbReference>
<dbReference type="Pumba" id="P97477"/>
<dbReference type="Antibodypedia" id="1129">
    <property type="antibodies" value="1077 antibodies from 46 providers"/>
</dbReference>
<dbReference type="DNASU" id="20878"/>
<dbReference type="Ensembl" id="ENSMUST00000028997.8">
    <molecule id="P97477-2"/>
    <property type="protein sequence ID" value="ENSMUSP00000028997.8"/>
    <property type="gene ID" value="ENSMUSG00000027496.16"/>
</dbReference>
<dbReference type="Ensembl" id="ENSMUST00000109139.8">
    <molecule id="P97477-1"/>
    <property type="protein sequence ID" value="ENSMUSP00000104767.2"/>
    <property type="gene ID" value="ENSMUSG00000027496.16"/>
</dbReference>
<dbReference type="Ensembl" id="ENSMUST00000109140.10">
    <molecule id="P97477-1"/>
    <property type="protein sequence ID" value="ENSMUSP00000104768.4"/>
    <property type="gene ID" value="ENSMUSG00000027496.16"/>
</dbReference>
<dbReference type="GeneID" id="20878"/>
<dbReference type="KEGG" id="mmu:20878"/>
<dbReference type="UCSC" id="uc008ocn.2">
    <molecule id="P97477-2"/>
    <property type="organism name" value="mouse"/>
</dbReference>
<dbReference type="UCSC" id="uc008oco.2">
    <molecule id="P97477-1"/>
    <property type="organism name" value="mouse"/>
</dbReference>
<dbReference type="AGR" id="MGI:894678"/>
<dbReference type="CTD" id="6790"/>
<dbReference type="MGI" id="MGI:894678">
    <property type="gene designation" value="Aurka"/>
</dbReference>
<dbReference type="VEuPathDB" id="HostDB:ENSMUSG00000027496"/>
<dbReference type="eggNOG" id="KOG0580">
    <property type="taxonomic scope" value="Eukaryota"/>
</dbReference>
<dbReference type="GeneTree" id="ENSGT00940000154900"/>
<dbReference type="HOGENOM" id="CLU_000288_63_6_1"/>
<dbReference type="InParanoid" id="P97477"/>
<dbReference type="OMA" id="ESRFPEW"/>
<dbReference type="OrthoDB" id="377346at2759"/>
<dbReference type="PhylomeDB" id="P97477"/>
<dbReference type="TreeFam" id="TF105331"/>
<dbReference type="Reactome" id="R-MMU-174178">
    <property type="pathway name" value="APC/C:Cdh1 mediated degradation of Cdc20 and other APC/C:Cdh1 targeted proteins in late mitosis/early G1"/>
</dbReference>
<dbReference type="Reactome" id="R-MMU-2565942">
    <property type="pathway name" value="Regulation of PLK1 Activity at G2/M Transition"/>
</dbReference>
<dbReference type="Reactome" id="R-MMU-6804114">
    <property type="pathway name" value="TP53 Regulates Transcription of Genes Involved in G2 Cell Cycle Arrest"/>
</dbReference>
<dbReference type="Reactome" id="R-MMU-6804756">
    <property type="pathway name" value="Regulation of TP53 Activity through Phosphorylation"/>
</dbReference>
<dbReference type="Reactome" id="R-MMU-8854050">
    <property type="pathway name" value="FBXL7 down-regulates AURKA during mitotic entry and in early mitosis"/>
</dbReference>
<dbReference type="Reactome" id="R-MMU-8854518">
    <property type="pathway name" value="AURKA Activation by TPX2"/>
</dbReference>
<dbReference type="Reactome" id="R-MMU-8854521">
    <property type="pathway name" value="Interaction between PHLDA1 and AURKA"/>
</dbReference>
<dbReference type="BioGRID-ORCS" id="20878">
    <property type="hits" value="24 hits in 84 CRISPR screens"/>
</dbReference>
<dbReference type="ChiTaRS" id="Aurka">
    <property type="organism name" value="mouse"/>
</dbReference>
<dbReference type="EvolutionaryTrace" id="P97477"/>
<dbReference type="PRO" id="PR:P97477"/>
<dbReference type="Proteomes" id="UP000000589">
    <property type="component" value="Chromosome 2"/>
</dbReference>
<dbReference type="RNAct" id="P97477">
    <property type="molecule type" value="protein"/>
</dbReference>
<dbReference type="Bgee" id="ENSMUSG00000027496">
    <property type="expression patterns" value="Expressed in secondary oocyte and 192 other cell types or tissues"/>
</dbReference>
<dbReference type="ExpressionAtlas" id="P97477">
    <property type="expression patterns" value="baseline and differential"/>
</dbReference>
<dbReference type="GO" id="GO:0043203">
    <property type="term" value="C:axon hillock"/>
    <property type="evidence" value="ECO:0000314"/>
    <property type="project" value="MGI"/>
</dbReference>
<dbReference type="GO" id="GO:0016323">
    <property type="term" value="C:basolateral plasma membrane"/>
    <property type="evidence" value="ECO:0000250"/>
    <property type="project" value="UniProtKB"/>
</dbReference>
<dbReference type="GO" id="GO:0005814">
    <property type="term" value="C:centriole"/>
    <property type="evidence" value="ECO:0007669"/>
    <property type="project" value="UniProtKB-SubCell"/>
</dbReference>
<dbReference type="GO" id="GO:0005813">
    <property type="term" value="C:centrosome"/>
    <property type="evidence" value="ECO:0000314"/>
    <property type="project" value="MGI"/>
</dbReference>
<dbReference type="GO" id="GO:0036064">
    <property type="term" value="C:ciliary basal body"/>
    <property type="evidence" value="ECO:0000250"/>
    <property type="project" value="UniProtKB"/>
</dbReference>
<dbReference type="GO" id="GO:0005829">
    <property type="term" value="C:cytosol"/>
    <property type="evidence" value="ECO:0000304"/>
    <property type="project" value="Reactome"/>
</dbReference>
<dbReference type="GO" id="GO:0042585">
    <property type="term" value="C:germinal vesicle"/>
    <property type="evidence" value="ECO:0000314"/>
    <property type="project" value="MGI"/>
</dbReference>
<dbReference type="GO" id="GO:0098978">
    <property type="term" value="C:glutamatergic synapse"/>
    <property type="evidence" value="ECO:0000314"/>
    <property type="project" value="SynGO"/>
</dbReference>
<dbReference type="GO" id="GO:0072687">
    <property type="term" value="C:meiotic spindle"/>
    <property type="evidence" value="ECO:0000314"/>
    <property type="project" value="MGI"/>
</dbReference>
<dbReference type="GO" id="GO:0005815">
    <property type="term" value="C:microtubule organizing center"/>
    <property type="evidence" value="ECO:0000314"/>
    <property type="project" value="UniProtKB"/>
</dbReference>
<dbReference type="GO" id="GO:0072686">
    <property type="term" value="C:mitotic spindle"/>
    <property type="evidence" value="ECO:0000314"/>
    <property type="project" value="MGI"/>
</dbReference>
<dbReference type="GO" id="GO:0097431">
    <property type="term" value="C:mitotic spindle pole"/>
    <property type="evidence" value="ECO:0000250"/>
    <property type="project" value="UniProtKB"/>
</dbReference>
<dbReference type="GO" id="GO:0005654">
    <property type="term" value="C:nucleoplasm"/>
    <property type="evidence" value="ECO:0000304"/>
    <property type="project" value="Reactome"/>
</dbReference>
<dbReference type="GO" id="GO:0048471">
    <property type="term" value="C:perinuclear region of cytoplasm"/>
    <property type="evidence" value="ECO:0007669"/>
    <property type="project" value="Ensembl"/>
</dbReference>
<dbReference type="GO" id="GO:0014069">
    <property type="term" value="C:postsynaptic density"/>
    <property type="evidence" value="ECO:0000314"/>
    <property type="project" value="SynGO"/>
</dbReference>
<dbReference type="GO" id="GO:0045120">
    <property type="term" value="C:pronucleus"/>
    <property type="evidence" value="ECO:0000314"/>
    <property type="project" value="MGI"/>
</dbReference>
<dbReference type="GO" id="GO:0005876">
    <property type="term" value="C:spindle microtubule"/>
    <property type="evidence" value="ECO:0007669"/>
    <property type="project" value="Ensembl"/>
</dbReference>
<dbReference type="GO" id="GO:0000922">
    <property type="term" value="C:spindle pole"/>
    <property type="evidence" value="ECO:0000314"/>
    <property type="project" value="UniProtKB"/>
</dbReference>
<dbReference type="GO" id="GO:0031616">
    <property type="term" value="C:spindle pole centrosome"/>
    <property type="evidence" value="ECO:0007669"/>
    <property type="project" value="Ensembl"/>
</dbReference>
<dbReference type="GO" id="GO:0005524">
    <property type="term" value="F:ATP binding"/>
    <property type="evidence" value="ECO:0007669"/>
    <property type="project" value="UniProtKB-KW"/>
</dbReference>
<dbReference type="GO" id="GO:0035175">
    <property type="term" value="F:histone H3S10 kinase activity"/>
    <property type="evidence" value="ECO:0000315"/>
    <property type="project" value="MGI"/>
</dbReference>
<dbReference type="GO" id="GO:0046982">
    <property type="term" value="F:protein heterodimerization activity"/>
    <property type="evidence" value="ECO:0007669"/>
    <property type="project" value="Ensembl"/>
</dbReference>
<dbReference type="GO" id="GO:0004672">
    <property type="term" value="F:protein kinase activity"/>
    <property type="evidence" value="ECO:0000314"/>
    <property type="project" value="MGI"/>
</dbReference>
<dbReference type="GO" id="GO:0019901">
    <property type="term" value="F:protein kinase binding"/>
    <property type="evidence" value="ECO:0007669"/>
    <property type="project" value="Ensembl"/>
</dbReference>
<dbReference type="GO" id="GO:0106310">
    <property type="term" value="F:protein serine kinase activity"/>
    <property type="evidence" value="ECO:0007669"/>
    <property type="project" value="RHEA"/>
</dbReference>
<dbReference type="GO" id="GO:0031625">
    <property type="term" value="F:ubiquitin protein ligase binding"/>
    <property type="evidence" value="ECO:0000353"/>
    <property type="project" value="MGI"/>
</dbReference>
<dbReference type="GO" id="GO:0009948">
    <property type="term" value="P:anterior/posterior axis specification"/>
    <property type="evidence" value="ECO:0000315"/>
    <property type="project" value="MGI"/>
</dbReference>
<dbReference type="GO" id="GO:0006915">
    <property type="term" value="P:apoptotic process"/>
    <property type="evidence" value="ECO:0000315"/>
    <property type="project" value="MGI"/>
</dbReference>
<dbReference type="GO" id="GO:0051301">
    <property type="term" value="P:cell division"/>
    <property type="evidence" value="ECO:0007669"/>
    <property type="project" value="UniProtKB-KW"/>
</dbReference>
<dbReference type="GO" id="GO:0007098">
    <property type="term" value="P:centrosome cycle"/>
    <property type="evidence" value="ECO:0000316"/>
    <property type="project" value="MGI"/>
</dbReference>
<dbReference type="GO" id="GO:0051642">
    <property type="term" value="P:centrosome localization"/>
    <property type="evidence" value="ECO:0000315"/>
    <property type="project" value="MGI"/>
</dbReference>
<dbReference type="GO" id="GO:0061523">
    <property type="term" value="P:cilium disassembly"/>
    <property type="evidence" value="ECO:0000250"/>
    <property type="project" value="UniProtKB"/>
</dbReference>
<dbReference type="GO" id="GO:0097421">
    <property type="term" value="P:liver regeneration"/>
    <property type="evidence" value="ECO:0000266"/>
    <property type="project" value="MGI"/>
</dbReference>
<dbReference type="GO" id="GO:0051321">
    <property type="term" value="P:meiotic cell cycle"/>
    <property type="evidence" value="ECO:0000315"/>
    <property type="project" value="MGI"/>
</dbReference>
<dbReference type="GO" id="GO:0000212">
    <property type="term" value="P:meiotic spindle organization"/>
    <property type="evidence" value="ECO:0000315"/>
    <property type="project" value="MGI"/>
</dbReference>
<dbReference type="GO" id="GO:0000226">
    <property type="term" value="P:microtubule cytoskeleton organization"/>
    <property type="evidence" value="ECO:0000316"/>
    <property type="project" value="MGI"/>
</dbReference>
<dbReference type="GO" id="GO:0000278">
    <property type="term" value="P:mitotic cell cycle"/>
    <property type="evidence" value="ECO:0000315"/>
    <property type="project" value="MGI"/>
</dbReference>
<dbReference type="GO" id="GO:0007100">
    <property type="term" value="P:mitotic centrosome separation"/>
    <property type="evidence" value="ECO:0000315"/>
    <property type="project" value="MGI"/>
</dbReference>
<dbReference type="GO" id="GO:0007052">
    <property type="term" value="P:mitotic spindle organization"/>
    <property type="evidence" value="ECO:0000315"/>
    <property type="project" value="MGI"/>
</dbReference>
<dbReference type="GO" id="GO:0043066">
    <property type="term" value="P:negative regulation of apoptotic process"/>
    <property type="evidence" value="ECO:0000315"/>
    <property type="project" value="MGI"/>
</dbReference>
<dbReference type="GO" id="GO:0010629">
    <property type="term" value="P:negative regulation of gene expression"/>
    <property type="evidence" value="ECO:0007669"/>
    <property type="project" value="Ensembl"/>
</dbReference>
<dbReference type="GO" id="GO:1990138">
    <property type="term" value="P:neuron projection extension"/>
    <property type="evidence" value="ECO:0000316"/>
    <property type="project" value="MGI"/>
</dbReference>
<dbReference type="GO" id="GO:0090141">
    <property type="term" value="P:positive regulation of mitochondrial fission"/>
    <property type="evidence" value="ECO:0007669"/>
    <property type="project" value="Ensembl"/>
</dbReference>
<dbReference type="GO" id="GO:0045931">
    <property type="term" value="P:positive regulation of mitotic cell cycle"/>
    <property type="evidence" value="ECO:0000250"/>
    <property type="project" value="UniProtKB"/>
</dbReference>
<dbReference type="GO" id="GO:1900195">
    <property type="term" value="P:positive regulation of oocyte maturation"/>
    <property type="evidence" value="ECO:0000315"/>
    <property type="project" value="MGI"/>
</dbReference>
<dbReference type="GO" id="GO:0032436">
    <property type="term" value="P:positive regulation of proteasomal ubiquitin-dependent protein catabolic process"/>
    <property type="evidence" value="ECO:0000315"/>
    <property type="project" value="MGI"/>
</dbReference>
<dbReference type="GO" id="GO:0043161">
    <property type="term" value="P:proteasome-mediated ubiquitin-dependent protein catabolic process"/>
    <property type="evidence" value="ECO:0000315"/>
    <property type="project" value="MGI"/>
</dbReference>
<dbReference type="GO" id="GO:0071539">
    <property type="term" value="P:protein localization to centrosome"/>
    <property type="evidence" value="ECO:0000315"/>
    <property type="project" value="MGI"/>
</dbReference>
<dbReference type="GO" id="GO:0031647">
    <property type="term" value="P:regulation of protein stability"/>
    <property type="evidence" value="ECO:0007669"/>
    <property type="project" value="Ensembl"/>
</dbReference>
<dbReference type="GO" id="GO:0009611">
    <property type="term" value="P:response to wounding"/>
    <property type="evidence" value="ECO:0000266"/>
    <property type="project" value="MGI"/>
</dbReference>
<dbReference type="GO" id="GO:0007057">
    <property type="term" value="P:spindle assembly involved in female meiosis I"/>
    <property type="evidence" value="ECO:0000315"/>
    <property type="project" value="MGI"/>
</dbReference>
<dbReference type="FunFam" id="3.30.200.20:FF:000042">
    <property type="entry name" value="Aurora kinase A"/>
    <property type="match status" value="1"/>
</dbReference>
<dbReference type="FunFam" id="1.10.510.10:FF:000235">
    <property type="entry name" value="Serine/threonine-protein kinase ark1"/>
    <property type="match status" value="1"/>
</dbReference>
<dbReference type="Gene3D" id="3.30.200.20">
    <property type="entry name" value="Phosphorylase Kinase, domain 1"/>
    <property type="match status" value="1"/>
</dbReference>
<dbReference type="Gene3D" id="1.10.510.10">
    <property type="entry name" value="Transferase(Phosphotransferase) domain 1"/>
    <property type="match status" value="1"/>
</dbReference>
<dbReference type="InterPro" id="IPR030616">
    <property type="entry name" value="Aur-like"/>
</dbReference>
<dbReference type="InterPro" id="IPR011009">
    <property type="entry name" value="Kinase-like_dom_sf"/>
</dbReference>
<dbReference type="InterPro" id="IPR000719">
    <property type="entry name" value="Prot_kinase_dom"/>
</dbReference>
<dbReference type="InterPro" id="IPR017441">
    <property type="entry name" value="Protein_kinase_ATP_BS"/>
</dbReference>
<dbReference type="InterPro" id="IPR008271">
    <property type="entry name" value="Ser/Thr_kinase_AS"/>
</dbReference>
<dbReference type="PANTHER" id="PTHR24350">
    <property type="entry name" value="SERINE/THREONINE-PROTEIN KINASE IAL-RELATED"/>
    <property type="match status" value="1"/>
</dbReference>
<dbReference type="Pfam" id="PF00069">
    <property type="entry name" value="Pkinase"/>
    <property type="match status" value="1"/>
</dbReference>
<dbReference type="SMART" id="SM00220">
    <property type="entry name" value="S_TKc"/>
    <property type="match status" value="1"/>
</dbReference>
<dbReference type="SUPFAM" id="SSF56112">
    <property type="entry name" value="Protein kinase-like (PK-like)"/>
    <property type="match status" value="1"/>
</dbReference>
<dbReference type="PROSITE" id="PS00107">
    <property type="entry name" value="PROTEIN_KINASE_ATP"/>
    <property type="match status" value="1"/>
</dbReference>
<dbReference type="PROSITE" id="PS50011">
    <property type="entry name" value="PROTEIN_KINASE_DOM"/>
    <property type="match status" value="1"/>
</dbReference>
<dbReference type="PROSITE" id="PS00108">
    <property type="entry name" value="PROTEIN_KINASE_ST"/>
    <property type="match status" value="1"/>
</dbReference>
<keyword id="KW-0002">3D-structure</keyword>
<keyword id="KW-0025">Alternative splicing</keyword>
<keyword id="KW-0067">ATP-binding</keyword>
<keyword id="KW-0131">Cell cycle</keyword>
<keyword id="KW-0132">Cell division</keyword>
<keyword id="KW-1003">Cell membrane</keyword>
<keyword id="KW-0966">Cell projection</keyword>
<keyword id="KW-0969">Cilium</keyword>
<keyword id="KW-0970">Cilium biogenesis/degradation</keyword>
<keyword id="KW-0963">Cytoplasm</keyword>
<keyword id="KW-0206">Cytoskeleton</keyword>
<keyword id="KW-1017">Isopeptide bond</keyword>
<keyword id="KW-0418">Kinase</keyword>
<keyword id="KW-0472">Membrane</keyword>
<keyword id="KW-0493">Microtubule</keyword>
<keyword id="KW-0498">Mitosis</keyword>
<keyword id="KW-0547">Nucleotide-binding</keyword>
<keyword id="KW-0597">Phosphoprotein</keyword>
<keyword id="KW-0656">Proto-oncogene</keyword>
<keyword id="KW-1185">Reference proteome</keyword>
<keyword id="KW-0723">Serine/threonine-protein kinase</keyword>
<keyword id="KW-0808">Transferase</keyword>
<keyword id="KW-0832">Ubl conjugation</keyword>
<sequence>MDRCKENCVSRPVKTTVPFGPKRVLVTEQIPSQNLGSASSGQAQRVLCPSNSQRVPSQAQKLGAGQKPAPKQLPAASVPRPVSRLNNPQKNEQPAASGNDSEKEQASLQKTEDTKKRQWTLEDFDIGRPLGKGKFGNVYLARERQSKFILALKVLFKTQLEKANVEHQLRREVEIQSHLRHPNILRLYGYFHDATRVYLILEYAPLGTVYRELQKLSKFDEQRTATYITELANALSYCHSKRVIHRDIKPENLLLGSNGELKIADFGWSVHAPSSRRTTMCGTLDYLPPEMIEGRMHDEKVDLWSLGVLCYEFLVGMPPFEAHTYQETYRRISRVEFTFPDFVTEGARDLISRLLKHNASQRLTLAEVLEHPWIKANSSKPPTGHTSKEPTSKSS</sequence>